<keyword id="KW-0963">Cytoplasm</keyword>
<keyword id="KW-0238">DNA-binding</keyword>
<keyword id="KW-0731">Sigma factor</keyword>
<keyword id="KW-0804">Transcription</keyword>
<keyword id="KW-0805">Transcription regulation</keyword>
<name>RPOD_RICTY</name>
<dbReference type="EMBL" id="AE017197">
    <property type="protein sequence ID" value="AAU04301.1"/>
    <property type="molecule type" value="Genomic_DNA"/>
</dbReference>
<dbReference type="RefSeq" id="WP_011191275.1">
    <property type="nucleotide sequence ID" value="NC_006142.1"/>
</dbReference>
<dbReference type="SMR" id="Q68VQ5"/>
<dbReference type="KEGG" id="rty:RT0847"/>
<dbReference type="eggNOG" id="COG0568">
    <property type="taxonomic scope" value="Bacteria"/>
</dbReference>
<dbReference type="HOGENOM" id="CLU_014793_7_2_5"/>
<dbReference type="OrthoDB" id="9809557at2"/>
<dbReference type="Proteomes" id="UP000000604">
    <property type="component" value="Chromosome"/>
</dbReference>
<dbReference type="GO" id="GO:0005737">
    <property type="term" value="C:cytoplasm"/>
    <property type="evidence" value="ECO:0007669"/>
    <property type="project" value="UniProtKB-SubCell"/>
</dbReference>
<dbReference type="GO" id="GO:0003677">
    <property type="term" value="F:DNA binding"/>
    <property type="evidence" value="ECO:0007669"/>
    <property type="project" value="UniProtKB-UniRule"/>
</dbReference>
<dbReference type="GO" id="GO:0016987">
    <property type="term" value="F:sigma factor activity"/>
    <property type="evidence" value="ECO:0007669"/>
    <property type="project" value="UniProtKB-UniRule"/>
</dbReference>
<dbReference type="GO" id="GO:0006352">
    <property type="term" value="P:DNA-templated transcription initiation"/>
    <property type="evidence" value="ECO:0007669"/>
    <property type="project" value="UniProtKB-UniRule"/>
</dbReference>
<dbReference type="CDD" id="cd06171">
    <property type="entry name" value="Sigma70_r4"/>
    <property type="match status" value="1"/>
</dbReference>
<dbReference type="FunFam" id="1.10.601.10:FF:000001">
    <property type="entry name" value="RNA polymerase sigma factor SigA"/>
    <property type="match status" value="1"/>
</dbReference>
<dbReference type="Gene3D" id="1.10.601.10">
    <property type="entry name" value="RNA Polymerase Primary Sigma Factor"/>
    <property type="match status" value="1"/>
</dbReference>
<dbReference type="Gene3D" id="1.10.220.120">
    <property type="entry name" value="Sigma-70 factor, region 1.1"/>
    <property type="match status" value="1"/>
</dbReference>
<dbReference type="Gene3D" id="1.10.10.10">
    <property type="entry name" value="Winged helix-like DNA-binding domain superfamily/Winged helix DNA-binding domain"/>
    <property type="match status" value="2"/>
</dbReference>
<dbReference type="HAMAP" id="MF_00963">
    <property type="entry name" value="Sigma70_RpoD_SigA"/>
    <property type="match status" value="1"/>
</dbReference>
<dbReference type="InterPro" id="IPR014284">
    <property type="entry name" value="RNA_pol_sigma-70_dom"/>
</dbReference>
<dbReference type="InterPro" id="IPR000943">
    <property type="entry name" value="RNA_pol_sigma70"/>
</dbReference>
<dbReference type="InterPro" id="IPR009042">
    <property type="entry name" value="RNA_pol_sigma70_r1_2"/>
</dbReference>
<dbReference type="InterPro" id="IPR007627">
    <property type="entry name" value="RNA_pol_sigma70_r2"/>
</dbReference>
<dbReference type="InterPro" id="IPR007624">
    <property type="entry name" value="RNA_pol_sigma70_r3"/>
</dbReference>
<dbReference type="InterPro" id="IPR007630">
    <property type="entry name" value="RNA_pol_sigma70_r4"/>
</dbReference>
<dbReference type="InterPro" id="IPR007631">
    <property type="entry name" value="RNA_pol_sigma_70_non-ess"/>
</dbReference>
<dbReference type="InterPro" id="IPR007127">
    <property type="entry name" value="RNA_pol_sigma_70_r1_1"/>
</dbReference>
<dbReference type="InterPro" id="IPR042189">
    <property type="entry name" value="RNA_pol_sigma_70_r1_1_sf"/>
</dbReference>
<dbReference type="InterPro" id="IPR013325">
    <property type="entry name" value="RNA_pol_sigma_r2"/>
</dbReference>
<dbReference type="InterPro" id="IPR013324">
    <property type="entry name" value="RNA_pol_sigma_r3/r4-like"/>
</dbReference>
<dbReference type="InterPro" id="IPR012760">
    <property type="entry name" value="RNA_pol_sigma_RpoD_C"/>
</dbReference>
<dbReference type="InterPro" id="IPR050239">
    <property type="entry name" value="Sigma-70_RNA_pol_init_factors"/>
</dbReference>
<dbReference type="InterPro" id="IPR028630">
    <property type="entry name" value="Sigma70_RpoD"/>
</dbReference>
<dbReference type="InterPro" id="IPR036388">
    <property type="entry name" value="WH-like_DNA-bd_sf"/>
</dbReference>
<dbReference type="NCBIfam" id="NF004208">
    <property type="entry name" value="PRK05658.1"/>
    <property type="match status" value="1"/>
</dbReference>
<dbReference type="NCBIfam" id="TIGR02393">
    <property type="entry name" value="RpoD_Cterm"/>
    <property type="match status" value="1"/>
</dbReference>
<dbReference type="NCBIfam" id="TIGR02937">
    <property type="entry name" value="sigma70-ECF"/>
    <property type="match status" value="1"/>
</dbReference>
<dbReference type="PANTHER" id="PTHR30603">
    <property type="entry name" value="RNA POLYMERASE SIGMA FACTOR RPO"/>
    <property type="match status" value="1"/>
</dbReference>
<dbReference type="PANTHER" id="PTHR30603:SF60">
    <property type="entry name" value="RNA POLYMERASE SIGMA FACTOR RPOD"/>
    <property type="match status" value="1"/>
</dbReference>
<dbReference type="Pfam" id="PF04546">
    <property type="entry name" value="Sigma70_ner"/>
    <property type="match status" value="1"/>
</dbReference>
<dbReference type="Pfam" id="PF03979">
    <property type="entry name" value="Sigma70_r1_1"/>
    <property type="match status" value="1"/>
</dbReference>
<dbReference type="Pfam" id="PF00140">
    <property type="entry name" value="Sigma70_r1_2"/>
    <property type="match status" value="1"/>
</dbReference>
<dbReference type="Pfam" id="PF04542">
    <property type="entry name" value="Sigma70_r2"/>
    <property type="match status" value="1"/>
</dbReference>
<dbReference type="Pfam" id="PF04539">
    <property type="entry name" value="Sigma70_r3"/>
    <property type="match status" value="1"/>
</dbReference>
<dbReference type="Pfam" id="PF04545">
    <property type="entry name" value="Sigma70_r4"/>
    <property type="match status" value="1"/>
</dbReference>
<dbReference type="PRINTS" id="PR00046">
    <property type="entry name" value="SIGMA70FCT"/>
</dbReference>
<dbReference type="SUPFAM" id="SSF88946">
    <property type="entry name" value="Sigma2 domain of RNA polymerase sigma factors"/>
    <property type="match status" value="1"/>
</dbReference>
<dbReference type="SUPFAM" id="SSF88659">
    <property type="entry name" value="Sigma3 and sigma4 domains of RNA polymerase sigma factors"/>
    <property type="match status" value="2"/>
</dbReference>
<dbReference type="PROSITE" id="PS00715">
    <property type="entry name" value="SIGMA70_1"/>
    <property type="match status" value="1"/>
</dbReference>
<dbReference type="PROSITE" id="PS00716">
    <property type="entry name" value="SIGMA70_2"/>
    <property type="match status" value="1"/>
</dbReference>
<gene>
    <name evidence="1" type="primary">rpoD</name>
    <name type="ordered locus">RT0847</name>
</gene>
<protein>
    <recommendedName>
        <fullName evidence="1">RNA polymerase sigma factor RpoD</fullName>
    </recommendedName>
    <alternativeName>
        <fullName evidence="1">Sigma-70</fullName>
    </alternativeName>
</protein>
<feature type="chain" id="PRO_0000286506" description="RNA polymerase sigma factor RpoD">
    <location>
        <begin position="1"/>
        <end position="635"/>
    </location>
</feature>
<feature type="DNA-binding region" description="H-T-H motif" evidence="1">
    <location>
        <begin position="581"/>
        <end position="600"/>
    </location>
</feature>
<feature type="region of interest" description="Disordered" evidence="2">
    <location>
        <begin position="182"/>
        <end position="202"/>
    </location>
</feature>
<feature type="region of interest" description="Sigma-70 factor domain-2" evidence="1">
    <location>
        <begin position="386"/>
        <end position="456"/>
    </location>
</feature>
<feature type="region of interest" description="Sigma-70 factor domain-3" evidence="1">
    <location>
        <begin position="465"/>
        <end position="542"/>
    </location>
</feature>
<feature type="region of interest" description="Sigma-70 factor domain-4" evidence="1">
    <location>
        <begin position="555"/>
        <end position="608"/>
    </location>
</feature>
<feature type="region of interest" description="Disordered" evidence="2">
    <location>
        <begin position="610"/>
        <end position="635"/>
    </location>
</feature>
<feature type="short sequence motif" description="Interaction with polymerase core subunit RpoC">
    <location>
        <begin position="410"/>
        <end position="413"/>
    </location>
</feature>
<feature type="compositionally biased region" description="Basic and acidic residues" evidence="2">
    <location>
        <begin position="182"/>
        <end position="191"/>
    </location>
</feature>
<evidence type="ECO:0000255" key="1">
    <source>
        <dbReference type="HAMAP-Rule" id="MF_00963"/>
    </source>
</evidence>
<evidence type="ECO:0000256" key="2">
    <source>
        <dbReference type="SAM" id="MobiDB-lite"/>
    </source>
</evidence>
<accession>Q68VQ5</accession>
<sequence>MSNSNIDNDPAKIDSLLRKAKSKKIPVTYDDINKALPLNKNPSIRQLEEAILKFSDAGVDILESNEDDEIKLDIGIDEEFKLSTNVDNESEDEVEEENIGSTDDPVRLYLKDMGGVDLLTRENEVEIAKRIEEGRKTMTASLCRSPVAMRCFIVWYEDLVNEKMLLRDLIDLEANMLHDEVHENDEEHNSETEVEEHEDNHLSMSRVETQILHNIIDRMKKISFICEELLIEAKKCYEESFDPKVLQNSRKYNNNLELLIHEVSEIHFNSKRTEEILGKMYGINRDLINKETAFLKLAEKYGVTRQNFLDEYIGSVINAAWKEKMLKNKKVAWKELITKESDYIDQMINELSVIESNTGLLVNDFKKLVNTIQKSERQTLQAKKDMIEANLRLVISIAKKYANRGLQFLDLIQEGNIGLMKAVDKFEYRRGYKFSTYATWWIRQAITRAIADQARTIRIPVHMIETINKILRTSRQMLNELGYEPTATEIANRLSMPLDKVRKVMKIAKEPISLENPVGDDSDGGQLGDFIEDKNAVAPIDAAIQSNLREVTTRVLATLTPREERVLRMRFGIGMNTDHTLEEVGQQFKVTRERIRQIESKALRKLQHPIRSKKLNSFRNGGKRGDGNPSDLLEA</sequence>
<proteinExistence type="inferred from homology"/>
<comment type="function">
    <text evidence="1">Sigma factors are initiation factors that promote the attachment of RNA polymerase to specific initiation sites and are then released. This sigma factor is the primary sigma factor during exponential growth.</text>
</comment>
<comment type="subunit">
    <text evidence="1">Interacts transiently with the RNA polymerase catalytic core.</text>
</comment>
<comment type="subcellular location">
    <subcellularLocation>
        <location evidence="1">Cytoplasm</location>
    </subcellularLocation>
</comment>
<comment type="similarity">
    <text evidence="1">Belongs to the sigma-70 factor family. RpoD/SigA subfamily.</text>
</comment>
<reference key="1">
    <citation type="journal article" date="2004" name="J. Bacteriol.">
        <title>Complete genome sequence of Rickettsia typhi and comparison with sequences of other Rickettsiae.</title>
        <authorList>
            <person name="McLeod M.P."/>
            <person name="Qin X."/>
            <person name="Karpathy S.E."/>
            <person name="Gioia J."/>
            <person name="Highlander S.K."/>
            <person name="Fox G.E."/>
            <person name="McNeill T.Z."/>
            <person name="Jiang H."/>
            <person name="Muzny D."/>
            <person name="Jacob L.S."/>
            <person name="Hawes A.C."/>
            <person name="Sodergren E."/>
            <person name="Gill R."/>
            <person name="Hume J."/>
            <person name="Morgan M."/>
            <person name="Fan G."/>
            <person name="Amin A.G."/>
            <person name="Gibbs R.A."/>
            <person name="Hong C."/>
            <person name="Yu X.-J."/>
            <person name="Walker D.H."/>
            <person name="Weinstock G.M."/>
        </authorList>
    </citation>
    <scope>NUCLEOTIDE SEQUENCE [LARGE SCALE GENOMIC DNA]</scope>
    <source>
        <strain>ATCC VR-144 / Wilmington</strain>
    </source>
</reference>
<organism>
    <name type="scientific">Rickettsia typhi (strain ATCC VR-144 / Wilmington)</name>
    <dbReference type="NCBI Taxonomy" id="257363"/>
    <lineage>
        <taxon>Bacteria</taxon>
        <taxon>Pseudomonadati</taxon>
        <taxon>Pseudomonadota</taxon>
        <taxon>Alphaproteobacteria</taxon>
        <taxon>Rickettsiales</taxon>
        <taxon>Rickettsiaceae</taxon>
        <taxon>Rickettsieae</taxon>
        <taxon>Rickettsia</taxon>
        <taxon>typhus group</taxon>
    </lineage>
</organism>